<feature type="chain" id="PRO_0000131564" description="Small ribosomal subunit protein uS5">
    <location>
        <begin position="1"/>
        <end position="171"/>
    </location>
</feature>
<feature type="domain" description="S5 DRBM" evidence="1">
    <location>
        <begin position="15"/>
        <end position="78"/>
    </location>
</feature>
<reference key="1">
    <citation type="journal article" date="2004" name="Nat. Genet.">
        <title>Reductive evolution suggested from the complete genome sequence of a plant-pathogenic phytoplasma.</title>
        <authorList>
            <person name="Oshima K."/>
            <person name="Kakizawa S."/>
            <person name="Nishigawa H."/>
            <person name="Jung H.-Y."/>
            <person name="Wei W."/>
            <person name="Suzuki S."/>
            <person name="Arashida R."/>
            <person name="Nakata D."/>
            <person name="Miyata S."/>
            <person name="Ugaki M."/>
            <person name="Namba S."/>
        </authorList>
    </citation>
    <scope>NUCLEOTIDE SEQUENCE [LARGE SCALE GENOMIC DNA]</scope>
    <source>
        <strain>OY-M</strain>
    </source>
</reference>
<evidence type="ECO:0000255" key="1">
    <source>
        <dbReference type="HAMAP-Rule" id="MF_01307"/>
    </source>
</evidence>
<evidence type="ECO:0000305" key="2"/>
<keyword id="KW-0687">Ribonucleoprotein</keyword>
<keyword id="KW-0689">Ribosomal protein</keyword>
<keyword id="KW-0694">RNA-binding</keyword>
<keyword id="KW-0699">rRNA-binding</keyword>
<sequence>MKAIKKEFNKKAPLLEEKVVKINRITKVVKGGARFRFSALVVVGDKKGQIGFATAKAKEIVEAIKKALEKAKKQLVRIPITGTTIPHDTIGRFGASKFFLKPASKGTGIVAGGKAARTILELVGINDVLTKTFGSRTSINVIRAVMDGLQSLRTKEEVAKLRGITLAKKEQ</sequence>
<dbReference type="EMBL" id="AP006628">
    <property type="protein sequence ID" value="BAD04302.1"/>
    <property type="molecule type" value="Genomic_DNA"/>
</dbReference>
<dbReference type="SMR" id="Q6YR05"/>
<dbReference type="STRING" id="262768.PAM_217"/>
<dbReference type="KEGG" id="poy:PAM_217"/>
<dbReference type="eggNOG" id="COG0098">
    <property type="taxonomic scope" value="Bacteria"/>
</dbReference>
<dbReference type="HOGENOM" id="CLU_065898_2_2_14"/>
<dbReference type="BioCyc" id="OYEL262768:G1G26-263-MONOMER"/>
<dbReference type="Proteomes" id="UP000002523">
    <property type="component" value="Chromosome"/>
</dbReference>
<dbReference type="GO" id="GO:0015935">
    <property type="term" value="C:small ribosomal subunit"/>
    <property type="evidence" value="ECO:0007669"/>
    <property type="project" value="InterPro"/>
</dbReference>
<dbReference type="GO" id="GO:0019843">
    <property type="term" value="F:rRNA binding"/>
    <property type="evidence" value="ECO:0007669"/>
    <property type="project" value="UniProtKB-UniRule"/>
</dbReference>
<dbReference type="GO" id="GO:0003735">
    <property type="term" value="F:structural constituent of ribosome"/>
    <property type="evidence" value="ECO:0007669"/>
    <property type="project" value="InterPro"/>
</dbReference>
<dbReference type="GO" id="GO:0006412">
    <property type="term" value="P:translation"/>
    <property type="evidence" value="ECO:0007669"/>
    <property type="project" value="UniProtKB-UniRule"/>
</dbReference>
<dbReference type="FunFam" id="3.30.160.20:FF:000001">
    <property type="entry name" value="30S ribosomal protein S5"/>
    <property type="match status" value="1"/>
</dbReference>
<dbReference type="FunFam" id="3.30.230.10:FF:000002">
    <property type="entry name" value="30S ribosomal protein S5"/>
    <property type="match status" value="1"/>
</dbReference>
<dbReference type="Gene3D" id="3.30.160.20">
    <property type="match status" value="1"/>
</dbReference>
<dbReference type="Gene3D" id="3.30.230.10">
    <property type="match status" value="1"/>
</dbReference>
<dbReference type="HAMAP" id="MF_01307_B">
    <property type="entry name" value="Ribosomal_uS5_B"/>
    <property type="match status" value="1"/>
</dbReference>
<dbReference type="InterPro" id="IPR020568">
    <property type="entry name" value="Ribosomal_Su5_D2-typ_SF"/>
</dbReference>
<dbReference type="InterPro" id="IPR000851">
    <property type="entry name" value="Ribosomal_uS5"/>
</dbReference>
<dbReference type="InterPro" id="IPR005712">
    <property type="entry name" value="Ribosomal_uS5_bac-type"/>
</dbReference>
<dbReference type="InterPro" id="IPR005324">
    <property type="entry name" value="Ribosomal_uS5_C"/>
</dbReference>
<dbReference type="InterPro" id="IPR013810">
    <property type="entry name" value="Ribosomal_uS5_N"/>
</dbReference>
<dbReference type="InterPro" id="IPR018192">
    <property type="entry name" value="Ribosomal_uS5_N_CS"/>
</dbReference>
<dbReference type="InterPro" id="IPR014721">
    <property type="entry name" value="Ribsml_uS5_D2-typ_fold_subgr"/>
</dbReference>
<dbReference type="NCBIfam" id="TIGR01021">
    <property type="entry name" value="rpsE_bact"/>
    <property type="match status" value="1"/>
</dbReference>
<dbReference type="PANTHER" id="PTHR48277">
    <property type="entry name" value="MITOCHONDRIAL RIBOSOMAL PROTEIN S5"/>
    <property type="match status" value="1"/>
</dbReference>
<dbReference type="PANTHER" id="PTHR48277:SF1">
    <property type="entry name" value="MITOCHONDRIAL RIBOSOMAL PROTEIN S5"/>
    <property type="match status" value="1"/>
</dbReference>
<dbReference type="Pfam" id="PF00333">
    <property type="entry name" value="Ribosomal_S5"/>
    <property type="match status" value="1"/>
</dbReference>
<dbReference type="Pfam" id="PF03719">
    <property type="entry name" value="Ribosomal_S5_C"/>
    <property type="match status" value="1"/>
</dbReference>
<dbReference type="SUPFAM" id="SSF54768">
    <property type="entry name" value="dsRNA-binding domain-like"/>
    <property type="match status" value="1"/>
</dbReference>
<dbReference type="SUPFAM" id="SSF54211">
    <property type="entry name" value="Ribosomal protein S5 domain 2-like"/>
    <property type="match status" value="1"/>
</dbReference>
<dbReference type="PROSITE" id="PS00585">
    <property type="entry name" value="RIBOSOMAL_S5"/>
    <property type="match status" value="1"/>
</dbReference>
<dbReference type="PROSITE" id="PS50881">
    <property type="entry name" value="S5_DSRBD"/>
    <property type="match status" value="1"/>
</dbReference>
<comment type="function">
    <text evidence="1">With S4 and S12 plays an important role in translational accuracy.</text>
</comment>
<comment type="function">
    <text evidence="1">Located at the back of the 30S subunit body where it stabilizes the conformation of the head with respect to the body.</text>
</comment>
<comment type="subunit">
    <text evidence="1">Part of the 30S ribosomal subunit. Contacts proteins S4 and S8.</text>
</comment>
<comment type="domain">
    <text>The N-terminal domain interacts with the head of the 30S subunit; the C-terminal domain interacts with the body and contacts protein S4. The interaction surface between S4 and S5 is involved in control of translational fidelity.</text>
</comment>
<comment type="similarity">
    <text evidence="1">Belongs to the universal ribosomal protein uS5 family.</text>
</comment>
<name>RS5_ONYPE</name>
<protein>
    <recommendedName>
        <fullName evidence="1">Small ribosomal subunit protein uS5</fullName>
    </recommendedName>
    <alternativeName>
        <fullName evidence="2">30S ribosomal protein S5</fullName>
    </alternativeName>
</protein>
<proteinExistence type="inferred from homology"/>
<organism>
    <name type="scientific">Onion yellows phytoplasma (strain OY-M)</name>
    <dbReference type="NCBI Taxonomy" id="262768"/>
    <lineage>
        <taxon>Bacteria</taxon>
        <taxon>Bacillati</taxon>
        <taxon>Mycoplasmatota</taxon>
        <taxon>Mollicutes</taxon>
        <taxon>Acholeplasmatales</taxon>
        <taxon>Acholeplasmataceae</taxon>
        <taxon>Candidatus Phytoplasma</taxon>
        <taxon>16SrI (Aster yellows group)</taxon>
    </lineage>
</organism>
<accession>Q6YR05</accession>
<gene>
    <name evidence="1" type="primary">rpsE</name>
    <name type="ordered locus">PAM_217</name>
</gene>